<reference key="1">
    <citation type="submission" date="2008-02" db="EMBL/GenBank/DDBJ databases">
        <title>Complete sequence of chromosome 2 of Burkholderia cenocepacia MC0-3.</title>
        <authorList>
            <person name="Copeland A."/>
            <person name="Lucas S."/>
            <person name="Lapidus A."/>
            <person name="Barry K."/>
            <person name="Bruce D."/>
            <person name="Goodwin L."/>
            <person name="Glavina del Rio T."/>
            <person name="Dalin E."/>
            <person name="Tice H."/>
            <person name="Pitluck S."/>
            <person name="Chain P."/>
            <person name="Malfatti S."/>
            <person name="Shin M."/>
            <person name="Vergez L."/>
            <person name="Schmutz J."/>
            <person name="Larimer F."/>
            <person name="Land M."/>
            <person name="Hauser L."/>
            <person name="Kyrpides N."/>
            <person name="Mikhailova N."/>
            <person name="Tiedje J."/>
            <person name="Richardson P."/>
        </authorList>
    </citation>
    <scope>NUCLEOTIDE SEQUENCE [LARGE SCALE GENOMIC DNA]</scope>
    <source>
        <strain>MC0-3</strain>
    </source>
</reference>
<feature type="chain" id="PRO_1000095697" description="Tryptophan synthase alpha chain">
    <location>
        <begin position="1"/>
        <end position="271"/>
    </location>
</feature>
<feature type="active site" description="Proton acceptor" evidence="1">
    <location>
        <position position="49"/>
    </location>
</feature>
<feature type="active site" description="Proton acceptor" evidence="1">
    <location>
        <position position="60"/>
    </location>
</feature>
<proteinExistence type="inferred from homology"/>
<name>TRPA_BURO0</name>
<organism>
    <name type="scientific">Burkholderia orbicola (strain MC0-3)</name>
    <dbReference type="NCBI Taxonomy" id="406425"/>
    <lineage>
        <taxon>Bacteria</taxon>
        <taxon>Pseudomonadati</taxon>
        <taxon>Pseudomonadota</taxon>
        <taxon>Betaproteobacteria</taxon>
        <taxon>Burkholderiales</taxon>
        <taxon>Burkholderiaceae</taxon>
        <taxon>Burkholderia</taxon>
        <taxon>Burkholderia cepacia complex</taxon>
        <taxon>Burkholderia orbicola</taxon>
    </lineage>
</organism>
<keyword id="KW-0028">Amino-acid biosynthesis</keyword>
<keyword id="KW-0057">Aromatic amino acid biosynthesis</keyword>
<keyword id="KW-0456">Lyase</keyword>
<keyword id="KW-0822">Tryptophan biosynthesis</keyword>
<sequence length="271" mass="28108">MNRIKQTFAALAEQGRKGLIPFITAGDPDPAKTVEFMHALAAGGADVIELGVPFSDPMADGPVIQRSSERALARGVTLKSVLADVKRFRETDPKTPVVLMGYANPIERMGVDAFAAEAHAAGVDGVLVVDYPPEEAGVFAEKMRAAQIDPIFLLAPTSTDERIADVGKIASGYVYYVSLKGVTGAGNLDVSSIAGKIPAIKSRVPVPVGVGFGIRDAETARAVAEVSDAVVIGSRLVQLLESAAPEGAAAALKTFIAELRAALDGAGNTAR</sequence>
<protein>
    <recommendedName>
        <fullName evidence="1">Tryptophan synthase alpha chain</fullName>
        <ecNumber evidence="1">4.2.1.20</ecNumber>
    </recommendedName>
</protein>
<dbReference type="EC" id="4.2.1.20" evidence="1"/>
<dbReference type="EMBL" id="CP000959">
    <property type="protein sequence ID" value="ACA92720.1"/>
    <property type="molecule type" value="Genomic_DNA"/>
</dbReference>
<dbReference type="RefSeq" id="WP_011548089.1">
    <property type="nucleotide sequence ID" value="NC_010515.1"/>
</dbReference>
<dbReference type="SMR" id="B1K366"/>
<dbReference type="GeneID" id="83050343"/>
<dbReference type="KEGG" id="bcm:Bcenmc03_3568"/>
<dbReference type="HOGENOM" id="CLU_016734_0_0_4"/>
<dbReference type="UniPathway" id="UPA00035">
    <property type="reaction ID" value="UER00044"/>
</dbReference>
<dbReference type="Proteomes" id="UP000002169">
    <property type="component" value="Chromosome 2"/>
</dbReference>
<dbReference type="GO" id="GO:0005829">
    <property type="term" value="C:cytosol"/>
    <property type="evidence" value="ECO:0007669"/>
    <property type="project" value="TreeGrafter"/>
</dbReference>
<dbReference type="GO" id="GO:0004834">
    <property type="term" value="F:tryptophan synthase activity"/>
    <property type="evidence" value="ECO:0007669"/>
    <property type="project" value="UniProtKB-UniRule"/>
</dbReference>
<dbReference type="CDD" id="cd04724">
    <property type="entry name" value="Tryptophan_synthase_alpha"/>
    <property type="match status" value="1"/>
</dbReference>
<dbReference type="FunFam" id="3.20.20.70:FF:000037">
    <property type="entry name" value="Tryptophan synthase alpha chain"/>
    <property type="match status" value="1"/>
</dbReference>
<dbReference type="Gene3D" id="3.20.20.70">
    <property type="entry name" value="Aldolase class I"/>
    <property type="match status" value="1"/>
</dbReference>
<dbReference type="HAMAP" id="MF_00131">
    <property type="entry name" value="Trp_synth_alpha"/>
    <property type="match status" value="1"/>
</dbReference>
<dbReference type="InterPro" id="IPR013785">
    <property type="entry name" value="Aldolase_TIM"/>
</dbReference>
<dbReference type="InterPro" id="IPR011060">
    <property type="entry name" value="RibuloseP-bd_barrel"/>
</dbReference>
<dbReference type="InterPro" id="IPR018204">
    <property type="entry name" value="Trp_synthase_alpha_AS"/>
</dbReference>
<dbReference type="InterPro" id="IPR002028">
    <property type="entry name" value="Trp_synthase_suA"/>
</dbReference>
<dbReference type="NCBIfam" id="TIGR00262">
    <property type="entry name" value="trpA"/>
    <property type="match status" value="1"/>
</dbReference>
<dbReference type="PANTHER" id="PTHR43406:SF1">
    <property type="entry name" value="TRYPTOPHAN SYNTHASE ALPHA CHAIN, CHLOROPLASTIC"/>
    <property type="match status" value="1"/>
</dbReference>
<dbReference type="PANTHER" id="PTHR43406">
    <property type="entry name" value="TRYPTOPHAN SYNTHASE, ALPHA CHAIN"/>
    <property type="match status" value="1"/>
</dbReference>
<dbReference type="Pfam" id="PF00290">
    <property type="entry name" value="Trp_syntA"/>
    <property type="match status" value="1"/>
</dbReference>
<dbReference type="SUPFAM" id="SSF51366">
    <property type="entry name" value="Ribulose-phoshate binding barrel"/>
    <property type="match status" value="1"/>
</dbReference>
<dbReference type="PROSITE" id="PS00167">
    <property type="entry name" value="TRP_SYNTHASE_ALPHA"/>
    <property type="match status" value="1"/>
</dbReference>
<accession>B1K366</accession>
<evidence type="ECO:0000255" key="1">
    <source>
        <dbReference type="HAMAP-Rule" id="MF_00131"/>
    </source>
</evidence>
<gene>
    <name evidence="1" type="primary">trpA</name>
    <name type="ordered locus">Bcenmc03_3568</name>
</gene>
<comment type="function">
    <text evidence="1">The alpha subunit is responsible for the aldol cleavage of indoleglycerol phosphate to indole and glyceraldehyde 3-phosphate.</text>
</comment>
<comment type="catalytic activity">
    <reaction evidence="1">
        <text>(1S,2R)-1-C-(indol-3-yl)glycerol 3-phosphate + L-serine = D-glyceraldehyde 3-phosphate + L-tryptophan + H2O</text>
        <dbReference type="Rhea" id="RHEA:10532"/>
        <dbReference type="ChEBI" id="CHEBI:15377"/>
        <dbReference type="ChEBI" id="CHEBI:33384"/>
        <dbReference type="ChEBI" id="CHEBI:57912"/>
        <dbReference type="ChEBI" id="CHEBI:58866"/>
        <dbReference type="ChEBI" id="CHEBI:59776"/>
        <dbReference type="EC" id="4.2.1.20"/>
    </reaction>
</comment>
<comment type="pathway">
    <text evidence="1">Amino-acid biosynthesis; L-tryptophan biosynthesis; L-tryptophan from chorismate: step 5/5.</text>
</comment>
<comment type="subunit">
    <text evidence="1">Tetramer of two alpha and two beta chains.</text>
</comment>
<comment type="similarity">
    <text evidence="1">Belongs to the TrpA family.</text>
</comment>